<organism>
    <name type="scientific">Bacillus thuringiensis (strain Al Hakam)</name>
    <dbReference type="NCBI Taxonomy" id="412694"/>
    <lineage>
        <taxon>Bacteria</taxon>
        <taxon>Bacillati</taxon>
        <taxon>Bacillota</taxon>
        <taxon>Bacilli</taxon>
        <taxon>Bacillales</taxon>
        <taxon>Bacillaceae</taxon>
        <taxon>Bacillus</taxon>
        <taxon>Bacillus cereus group</taxon>
    </lineage>
</organism>
<feature type="chain" id="PRO_1000065384" description="Redox-sensing transcriptional repressor Rex">
    <location>
        <begin position="1"/>
        <end position="209"/>
    </location>
</feature>
<feature type="DNA-binding region" description="H-T-H motif" evidence="1">
    <location>
        <begin position="16"/>
        <end position="55"/>
    </location>
</feature>
<feature type="binding site" evidence="1">
    <location>
        <begin position="90"/>
        <end position="95"/>
    </location>
    <ligand>
        <name>NAD(+)</name>
        <dbReference type="ChEBI" id="CHEBI:57540"/>
    </ligand>
</feature>
<comment type="function">
    <text evidence="1">Modulates transcription in response to changes in cellular NADH/NAD(+) redox state.</text>
</comment>
<comment type="subunit">
    <text evidence="1">Homodimer.</text>
</comment>
<comment type="subcellular location">
    <subcellularLocation>
        <location evidence="1">Cytoplasm</location>
    </subcellularLocation>
</comment>
<comment type="similarity">
    <text evidence="1">Belongs to the transcriptional regulatory Rex family.</text>
</comment>
<proteinExistence type="inferred from homology"/>
<reference key="1">
    <citation type="journal article" date="2007" name="J. Bacteriol.">
        <title>The complete genome sequence of Bacillus thuringiensis Al Hakam.</title>
        <authorList>
            <person name="Challacombe J.F."/>
            <person name="Altherr M.R."/>
            <person name="Xie G."/>
            <person name="Bhotika S.S."/>
            <person name="Brown N."/>
            <person name="Bruce D."/>
            <person name="Campbell C.S."/>
            <person name="Campbell M.L."/>
            <person name="Chen J."/>
            <person name="Chertkov O."/>
            <person name="Cleland C."/>
            <person name="Dimitrijevic M."/>
            <person name="Doggett N.A."/>
            <person name="Fawcett J.J."/>
            <person name="Glavina T."/>
            <person name="Goodwin L.A."/>
            <person name="Green L.D."/>
            <person name="Han C.S."/>
            <person name="Hill K.K."/>
            <person name="Hitchcock P."/>
            <person name="Jackson P.J."/>
            <person name="Keim P."/>
            <person name="Kewalramani A.R."/>
            <person name="Longmire J."/>
            <person name="Lucas S."/>
            <person name="Malfatti S."/>
            <person name="Martinez D."/>
            <person name="McMurry K."/>
            <person name="Meincke L.J."/>
            <person name="Misra M."/>
            <person name="Moseman B.L."/>
            <person name="Mundt M."/>
            <person name="Munk A.C."/>
            <person name="Okinaka R.T."/>
            <person name="Parson-Quintana B."/>
            <person name="Reilly L.P."/>
            <person name="Richardson P."/>
            <person name="Robinson D.L."/>
            <person name="Saunders E."/>
            <person name="Tapia R."/>
            <person name="Tesmer J.G."/>
            <person name="Thayer N."/>
            <person name="Thompson L.S."/>
            <person name="Tice H."/>
            <person name="Ticknor L.O."/>
            <person name="Wills P.L."/>
            <person name="Gilna P."/>
            <person name="Brettin T.S."/>
        </authorList>
    </citation>
    <scope>NUCLEOTIDE SEQUENCE [LARGE SCALE GENOMIC DNA]</scope>
    <source>
        <strain>Al Hakam</strain>
    </source>
</reference>
<accession>A0R8W1</accession>
<gene>
    <name evidence="1" type="primary">rex</name>
    <name type="ordered locus">BALH_0248</name>
</gene>
<name>REX_BACAH</name>
<protein>
    <recommendedName>
        <fullName evidence="1">Redox-sensing transcriptional repressor Rex</fullName>
    </recommendedName>
</protein>
<sequence length="209" mass="23503">MEQQKIPQATAKRLPLYYRFIQNLSLSGKQRVSSAELSEAVKVDSATIRRDFSYFGALGKKGYGYNVNYLLSFFRETLDQDDITRVALIGVGNLGTAFLHYNFTKNNNTKIEMAFDVSEEKVGTEIGGIPVYHLDELEERLSTDIQVAILTVPATVAQSVADRLAETNVHGILNFTPARLNVSESIRIHHIDLAVELQTLVYFLKNYPQ</sequence>
<evidence type="ECO:0000255" key="1">
    <source>
        <dbReference type="HAMAP-Rule" id="MF_01131"/>
    </source>
</evidence>
<keyword id="KW-0963">Cytoplasm</keyword>
<keyword id="KW-0238">DNA-binding</keyword>
<keyword id="KW-0520">NAD</keyword>
<keyword id="KW-0678">Repressor</keyword>
<keyword id="KW-0804">Transcription</keyword>
<keyword id="KW-0805">Transcription regulation</keyword>
<dbReference type="EMBL" id="CP000485">
    <property type="protein sequence ID" value="ABK83654.1"/>
    <property type="molecule type" value="Genomic_DNA"/>
</dbReference>
<dbReference type="RefSeq" id="WP_000437706.1">
    <property type="nucleotide sequence ID" value="NC_008600.1"/>
</dbReference>
<dbReference type="SMR" id="A0R8W1"/>
<dbReference type="KEGG" id="btl:BALH_0248"/>
<dbReference type="HOGENOM" id="CLU_061534_1_1_9"/>
<dbReference type="GO" id="GO:0005737">
    <property type="term" value="C:cytoplasm"/>
    <property type="evidence" value="ECO:0007669"/>
    <property type="project" value="UniProtKB-SubCell"/>
</dbReference>
<dbReference type="GO" id="GO:0003677">
    <property type="term" value="F:DNA binding"/>
    <property type="evidence" value="ECO:0007669"/>
    <property type="project" value="UniProtKB-UniRule"/>
</dbReference>
<dbReference type="GO" id="GO:0003700">
    <property type="term" value="F:DNA-binding transcription factor activity"/>
    <property type="evidence" value="ECO:0007669"/>
    <property type="project" value="UniProtKB-UniRule"/>
</dbReference>
<dbReference type="GO" id="GO:0045892">
    <property type="term" value="P:negative regulation of DNA-templated transcription"/>
    <property type="evidence" value="ECO:0007669"/>
    <property type="project" value="InterPro"/>
</dbReference>
<dbReference type="GO" id="GO:0051775">
    <property type="term" value="P:response to redox state"/>
    <property type="evidence" value="ECO:0007669"/>
    <property type="project" value="InterPro"/>
</dbReference>
<dbReference type="Gene3D" id="3.40.50.720">
    <property type="entry name" value="NAD(P)-binding Rossmann-like Domain"/>
    <property type="match status" value="1"/>
</dbReference>
<dbReference type="Gene3D" id="1.10.10.10">
    <property type="entry name" value="Winged helix-like DNA-binding domain superfamily/Winged helix DNA-binding domain"/>
    <property type="match status" value="1"/>
</dbReference>
<dbReference type="HAMAP" id="MF_01131">
    <property type="entry name" value="Rex"/>
    <property type="match status" value="1"/>
</dbReference>
<dbReference type="InterPro" id="IPR003781">
    <property type="entry name" value="CoA-bd"/>
</dbReference>
<dbReference type="InterPro" id="IPR036291">
    <property type="entry name" value="NAD(P)-bd_dom_sf"/>
</dbReference>
<dbReference type="InterPro" id="IPR009718">
    <property type="entry name" value="Rex_DNA-bd_C_dom"/>
</dbReference>
<dbReference type="InterPro" id="IPR022876">
    <property type="entry name" value="Tscrpt_rep_Rex"/>
</dbReference>
<dbReference type="InterPro" id="IPR036388">
    <property type="entry name" value="WH-like_DNA-bd_sf"/>
</dbReference>
<dbReference type="InterPro" id="IPR036390">
    <property type="entry name" value="WH_DNA-bd_sf"/>
</dbReference>
<dbReference type="NCBIfam" id="NF003989">
    <property type="entry name" value="PRK05472.1-3"/>
    <property type="match status" value="1"/>
</dbReference>
<dbReference type="NCBIfam" id="NF003991">
    <property type="entry name" value="PRK05472.1-5"/>
    <property type="match status" value="1"/>
</dbReference>
<dbReference type="NCBIfam" id="NF003994">
    <property type="entry name" value="PRK05472.2-3"/>
    <property type="match status" value="1"/>
</dbReference>
<dbReference type="NCBIfam" id="NF003995">
    <property type="entry name" value="PRK05472.2-4"/>
    <property type="match status" value="1"/>
</dbReference>
<dbReference type="NCBIfam" id="NF003996">
    <property type="entry name" value="PRK05472.2-5"/>
    <property type="match status" value="1"/>
</dbReference>
<dbReference type="PANTHER" id="PTHR35786">
    <property type="entry name" value="REDOX-SENSING TRANSCRIPTIONAL REPRESSOR REX"/>
    <property type="match status" value="1"/>
</dbReference>
<dbReference type="PANTHER" id="PTHR35786:SF1">
    <property type="entry name" value="REDOX-SENSING TRANSCRIPTIONAL REPRESSOR REX 1"/>
    <property type="match status" value="1"/>
</dbReference>
<dbReference type="Pfam" id="PF02629">
    <property type="entry name" value="CoA_binding"/>
    <property type="match status" value="1"/>
</dbReference>
<dbReference type="Pfam" id="PF06971">
    <property type="entry name" value="Put_DNA-bind_N"/>
    <property type="match status" value="1"/>
</dbReference>
<dbReference type="SMART" id="SM00881">
    <property type="entry name" value="CoA_binding"/>
    <property type="match status" value="1"/>
</dbReference>
<dbReference type="SUPFAM" id="SSF51735">
    <property type="entry name" value="NAD(P)-binding Rossmann-fold domains"/>
    <property type="match status" value="1"/>
</dbReference>
<dbReference type="SUPFAM" id="SSF46785">
    <property type="entry name" value="Winged helix' DNA-binding domain"/>
    <property type="match status" value="1"/>
</dbReference>